<sequence>MEVTDVRLRRVNTEGRMRAIASITLDHEFVVHDIRVIDGNNGLFVAMPSKRTPDGEFRDIAHPINSGTRSKIQDAVLTEYHRLGELEEVEFEEAGAS</sequence>
<keyword id="KW-0131">Cell cycle</keyword>
<keyword id="KW-0132">Cell division</keyword>
<keyword id="KW-1185">Reference proteome</keyword>
<keyword id="KW-0717">Septation</keyword>
<keyword id="KW-0749">Sporulation</keyword>
<dbReference type="EMBL" id="AE016877">
    <property type="protein sequence ID" value="AAP07151.1"/>
    <property type="molecule type" value="Genomic_DNA"/>
</dbReference>
<dbReference type="RefSeq" id="NP_829950.1">
    <property type="nucleotide sequence ID" value="NC_004722.1"/>
</dbReference>
<dbReference type="RefSeq" id="WP_000454041.1">
    <property type="nucleotide sequence ID" value="NZ_CP138336.1"/>
</dbReference>
<dbReference type="SMR" id="Q81J99"/>
<dbReference type="STRING" id="226900.BC_0053"/>
<dbReference type="MetOSite" id="Q81J99"/>
<dbReference type="GeneID" id="93011022"/>
<dbReference type="KEGG" id="bce:BC0053"/>
<dbReference type="PATRIC" id="fig|226900.8.peg.70"/>
<dbReference type="HOGENOM" id="CLU_103669_2_1_9"/>
<dbReference type="OrthoDB" id="9796286at2"/>
<dbReference type="Proteomes" id="UP000001417">
    <property type="component" value="Chromosome"/>
</dbReference>
<dbReference type="GO" id="GO:0030436">
    <property type="term" value="P:asexual sporulation"/>
    <property type="evidence" value="ECO:0007669"/>
    <property type="project" value="UniProtKB-UniRule"/>
</dbReference>
<dbReference type="GO" id="GO:0000917">
    <property type="term" value="P:division septum assembly"/>
    <property type="evidence" value="ECO:0007669"/>
    <property type="project" value="UniProtKB-KW"/>
</dbReference>
<dbReference type="GO" id="GO:0030435">
    <property type="term" value="P:sporulation resulting in formation of a cellular spore"/>
    <property type="evidence" value="ECO:0007669"/>
    <property type="project" value="UniProtKB-KW"/>
</dbReference>
<dbReference type="FunFam" id="3.30.1120.40:FF:000001">
    <property type="entry name" value="Putative septation protein SpoVG"/>
    <property type="match status" value="1"/>
</dbReference>
<dbReference type="Gene3D" id="3.30.1120.40">
    <property type="entry name" value="Stage V sporulation protein G"/>
    <property type="match status" value="1"/>
</dbReference>
<dbReference type="HAMAP" id="MF_00819">
    <property type="entry name" value="SpoVG"/>
    <property type="match status" value="1"/>
</dbReference>
<dbReference type="InterPro" id="IPR007170">
    <property type="entry name" value="SpoVG"/>
</dbReference>
<dbReference type="InterPro" id="IPR036751">
    <property type="entry name" value="SpoVG_sf"/>
</dbReference>
<dbReference type="NCBIfam" id="NF009749">
    <property type="entry name" value="PRK13259.1"/>
    <property type="match status" value="1"/>
</dbReference>
<dbReference type="PANTHER" id="PTHR38429">
    <property type="entry name" value="SEPTATION PROTEIN SPOVG-RELATED"/>
    <property type="match status" value="1"/>
</dbReference>
<dbReference type="PANTHER" id="PTHR38429:SF1">
    <property type="entry name" value="SEPTATION PROTEIN SPOVG-RELATED"/>
    <property type="match status" value="1"/>
</dbReference>
<dbReference type="Pfam" id="PF04026">
    <property type="entry name" value="SpoVG"/>
    <property type="match status" value="1"/>
</dbReference>
<dbReference type="SUPFAM" id="SSF160537">
    <property type="entry name" value="SpoVG-like"/>
    <property type="match status" value="1"/>
</dbReference>
<evidence type="ECO:0000255" key="1">
    <source>
        <dbReference type="HAMAP-Rule" id="MF_00819"/>
    </source>
</evidence>
<organism>
    <name type="scientific">Bacillus cereus (strain ATCC 14579 / DSM 31 / CCUG 7414 / JCM 2152 / NBRC 15305 / NCIMB 9373 / NCTC 2599 / NRRL B-3711)</name>
    <dbReference type="NCBI Taxonomy" id="226900"/>
    <lineage>
        <taxon>Bacteria</taxon>
        <taxon>Bacillati</taxon>
        <taxon>Bacillota</taxon>
        <taxon>Bacilli</taxon>
        <taxon>Bacillales</taxon>
        <taxon>Bacillaceae</taxon>
        <taxon>Bacillus</taxon>
        <taxon>Bacillus cereus group</taxon>
    </lineage>
</organism>
<comment type="function">
    <text evidence="1">Essential for sporulation. Interferes with or is a negative regulator of the pathway leading to asymmetric septation.</text>
</comment>
<comment type="similarity">
    <text evidence="1">Belongs to the SpoVG family.</text>
</comment>
<protein>
    <recommendedName>
        <fullName evidence="1">Putative septation protein SpoVG</fullName>
    </recommendedName>
    <alternativeName>
        <fullName evidence="1">Stage V sporulation protein G</fullName>
    </alternativeName>
</protein>
<accession>Q81J99</accession>
<name>SP5G_BACCR</name>
<gene>
    <name evidence="1" type="primary">spoVG</name>
    <name type="ordered locus">BC_0053</name>
</gene>
<proteinExistence type="inferred from homology"/>
<reference key="1">
    <citation type="journal article" date="2003" name="Nature">
        <title>Genome sequence of Bacillus cereus and comparative analysis with Bacillus anthracis.</title>
        <authorList>
            <person name="Ivanova N."/>
            <person name="Sorokin A."/>
            <person name="Anderson I."/>
            <person name="Galleron N."/>
            <person name="Candelon B."/>
            <person name="Kapatral V."/>
            <person name="Bhattacharyya A."/>
            <person name="Reznik G."/>
            <person name="Mikhailova N."/>
            <person name="Lapidus A."/>
            <person name="Chu L."/>
            <person name="Mazur M."/>
            <person name="Goltsman E."/>
            <person name="Larsen N."/>
            <person name="D'Souza M."/>
            <person name="Walunas T."/>
            <person name="Grechkin Y."/>
            <person name="Pusch G."/>
            <person name="Haselkorn R."/>
            <person name="Fonstein M."/>
            <person name="Ehrlich S.D."/>
            <person name="Overbeek R."/>
            <person name="Kyrpides N.C."/>
        </authorList>
    </citation>
    <scope>NUCLEOTIDE SEQUENCE [LARGE SCALE GENOMIC DNA]</scope>
    <source>
        <strain>ATCC 14579 / DSM 31 / CCUG 7414 / JCM 2152 / NBRC 15305 / NCIMB 9373 / NCTC 2599 / NRRL B-3711</strain>
    </source>
</reference>
<feature type="chain" id="PRO_0000157182" description="Putative septation protein SpoVG">
    <location>
        <begin position="1"/>
        <end position="97"/>
    </location>
</feature>